<name>MBTP1_RAT</name>
<gene>
    <name type="primary">Mbtps1</name>
    <name type="synonym">S1p</name>
    <name evidence="6" type="synonym">Ski1</name>
</gene>
<dbReference type="EC" id="3.4.21.112" evidence="5"/>
<dbReference type="EMBL" id="AF094821">
    <property type="protein sequence ID" value="AAD27011.1"/>
    <property type="molecule type" value="mRNA"/>
</dbReference>
<dbReference type="EMBL" id="AABR06099111">
    <property type="status" value="NOT_ANNOTATED_CDS"/>
    <property type="molecule type" value="Genomic_DNA"/>
</dbReference>
<dbReference type="EMBL" id="CH473972">
    <property type="protein sequence ID" value="EDL92670.1"/>
    <property type="molecule type" value="Genomic_DNA"/>
</dbReference>
<dbReference type="RefSeq" id="NP_446021.2">
    <property type="nucleotide sequence ID" value="NM_053569.2"/>
</dbReference>
<dbReference type="RefSeq" id="XP_006255785.1">
    <property type="nucleotide sequence ID" value="XM_006255723.3"/>
</dbReference>
<dbReference type="SMR" id="Q9WTZ3"/>
<dbReference type="BioGRID" id="250155">
    <property type="interactions" value="1"/>
</dbReference>
<dbReference type="FunCoup" id="Q9WTZ3">
    <property type="interactions" value="2529"/>
</dbReference>
<dbReference type="IntAct" id="Q9WTZ3">
    <property type="interactions" value="1"/>
</dbReference>
<dbReference type="MINT" id="Q9WTZ3"/>
<dbReference type="STRING" id="10116.ENSRNOP00000071317"/>
<dbReference type="MEROPS" id="S08.063"/>
<dbReference type="GlyCosmos" id="Q9WTZ3">
    <property type="glycosylation" value="6 sites, No reported glycans"/>
</dbReference>
<dbReference type="GlyGen" id="Q9WTZ3">
    <property type="glycosylation" value="8 sites"/>
</dbReference>
<dbReference type="PhosphoSitePlus" id="Q9WTZ3"/>
<dbReference type="PaxDb" id="10116-ENSRNOP00000020838"/>
<dbReference type="Ensembl" id="ENSRNOT00000020838.8">
    <property type="protein sequence ID" value="ENSRNOP00000020838.4"/>
    <property type="gene ID" value="ENSRNOG00000015173.8"/>
</dbReference>
<dbReference type="GeneID" id="89842"/>
<dbReference type="KEGG" id="rno:89842"/>
<dbReference type="UCSC" id="RGD:70935">
    <property type="organism name" value="rat"/>
</dbReference>
<dbReference type="AGR" id="RGD:70935"/>
<dbReference type="CTD" id="8720"/>
<dbReference type="RGD" id="70935">
    <property type="gene designation" value="Mbtps1"/>
</dbReference>
<dbReference type="eggNOG" id="KOG4266">
    <property type="taxonomic scope" value="Eukaryota"/>
</dbReference>
<dbReference type="GeneTree" id="ENSGT00490000043404"/>
<dbReference type="InParanoid" id="Q9WTZ3"/>
<dbReference type="OrthoDB" id="1740355at2759"/>
<dbReference type="TreeFam" id="TF324501"/>
<dbReference type="BRENDA" id="3.4.21.112">
    <property type="organism ID" value="5301"/>
</dbReference>
<dbReference type="Reactome" id="R-RNO-1655829">
    <property type="pathway name" value="Regulation of cholesterol biosynthesis by SREBP (SREBF)"/>
</dbReference>
<dbReference type="Reactome" id="R-RNO-381033">
    <property type="pathway name" value="ATF6 (ATF6-alpha) activates chaperones"/>
</dbReference>
<dbReference type="Reactome" id="R-RNO-381426">
    <property type="pathway name" value="Regulation of Insulin-like Growth Factor (IGF) transport and uptake by Insulin-like Growth Factor Binding Proteins (IGFBPs)"/>
</dbReference>
<dbReference type="Reactome" id="R-RNO-8874177">
    <property type="pathway name" value="ATF6B (ATF6-beta) activates chaperones"/>
</dbReference>
<dbReference type="Reactome" id="R-RNO-8874211">
    <property type="pathway name" value="CREB3 factors activate genes"/>
</dbReference>
<dbReference type="Reactome" id="R-RNO-8957275">
    <property type="pathway name" value="Post-translational protein phosphorylation"/>
</dbReference>
<dbReference type="PRO" id="PR:Q9WTZ3"/>
<dbReference type="Proteomes" id="UP000002494">
    <property type="component" value="Chromosome 19"/>
</dbReference>
<dbReference type="Proteomes" id="UP000234681">
    <property type="component" value="Chromosome 19"/>
</dbReference>
<dbReference type="Bgee" id="ENSRNOG00000015173">
    <property type="expression patterns" value="Expressed in lung and 19 other cell types or tissues"/>
</dbReference>
<dbReference type="GO" id="GO:0005789">
    <property type="term" value="C:endoplasmic reticulum membrane"/>
    <property type="evidence" value="ECO:0007669"/>
    <property type="project" value="UniProtKB-SubCell"/>
</dbReference>
<dbReference type="GO" id="GO:0005794">
    <property type="term" value="C:Golgi apparatus"/>
    <property type="evidence" value="ECO:0000318"/>
    <property type="project" value="GO_Central"/>
</dbReference>
<dbReference type="GO" id="GO:0000139">
    <property type="term" value="C:Golgi membrane"/>
    <property type="evidence" value="ECO:0000266"/>
    <property type="project" value="RGD"/>
</dbReference>
<dbReference type="GO" id="GO:0005795">
    <property type="term" value="C:Golgi stack"/>
    <property type="evidence" value="ECO:0000266"/>
    <property type="project" value="RGD"/>
</dbReference>
<dbReference type="GO" id="GO:0004252">
    <property type="term" value="F:serine-type endopeptidase activity"/>
    <property type="evidence" value="ECO:0000314"/>
    <property type="project" value="RGD"/>
</dbReference>
<dbReference type="GO" id="GO:0008203">
    <property type="term" value="P:cholesterol metabolic process"/>
    <property type="evidence" value="ECO:0007669"/>
    <property type="project" value="UniProtKB-KW"/>
</dbReference>
<dbReference type="GO" id="GO:0006629">
    <property type="term" value="P:lipid metabolic process"/>
    <property type="evidence" value="ECO:0000266"/>
    <property type="project" value="RGD"/>
</dbReference>
<dbReference type="GO" id="GO:0007040">
    <property type="term" value="P:lysosome organization"/>
    <property type="evidence" value="ECO:0000250"/>
    <property type="project" value="UniProtKB"/>
</dbReference>
<dbReference type="GO" id="GO:0031293">
    <property type="term" value="P:membrane protein intracellular domain proteolysis"/>
    <property type="evidence" value="ECO:0000266"/>
    <property type="project" value="RGD"/>
</dbReference>
<dbReference type="GO" id="GO:0007095">
    <property type="term" value="P:mitotic G2 DNA damage checkpoint signaling"/>
    <property type="evidence" value="ECO:0000266"/>
    <property type="project" value="RGD"/>
</dbReference>
<dbReference type="GO" id="GO:0051604">
    <property type="term" value="P:protein maturation"/>
    <property type="evidence" value="ECO:0000266"/>
    <property type="project" value="RGD"/>
</dbReference>
<dbReference type="GO" id="GO:0016485">
    <property type="term" value="P:protein processing"/>
    <property type="evidence" value="ECO:0000250"/>
    <property type="project" value="UniProtKB"/>
</dbReference>
<dbReference type="GO" id="GO:0006508">
    <property type="term" value="P:proteolysis"/>
    <property type="evidence" value="ECO:0000250"/>
    <property type="project" value="UniProtKB"/>
</dbReference>
<dbReference type="GO" id="GO:0060627">
    <property type="term" value="P:regulation of vesicle-mediated transport"/>
    <property type="evidence" value="ECO:0000266"/>
    <property type="project" value="RGD"/>
</dbReference>
<dbReference type="CDD" id="cd07479">
    <property type="entry name" value="Peptidases_S8_SKI-1_like"/>
    <property type="match status" value="1"/>
</dbReference>
<dbReference type="FunFam" id="3.40.50.200:FF:000008">
    <property type="entry name" value="Membrane-bound transcription factor site-1 protease preproprotein"/>
    <property type="match status" value="1"/>
</dbReference>
<dbReference type="Gene3D" id="3.40.50.200">
    <property type="entry name" value="Peptidase S8/S53 domain"/>
    <property type="match status" value="1"/>
</dbReference>
<dbReference type="InterPro" id="IPR055143">
    <property type="entry name" value="MBTP1_N"/>
</dbReference>
<dbReference type="InterPro" id="IPR057060">
    <property type="entry name" value="MBTPS1_3rd"/>
</dbReference>
<dbReference type="InterPro" id="IPR057032">
    <property type="entry name" value="MBTPS1_4th"/>
</dbReference>
<dbReference type="InterPro" id="IPR000209">
    <property type="entry name" value="Peptidase_S8/S53_dom"/>
</dbReference>
<dbReference type="InterPro" id="IPR036852">
    <property type="entry name" value="Peptidase_S8/S53_dom_sf"/>
</dbReference>
<dbReference type="InterPro" id="IPR022398">
    <property type="entry name" value="Peptidase_S8_His-AS"/>
</dbReference>
<dbReference type="InterPro" id="IPR023828">
    <property type="entry name" value="Peptidase_S8_Ser-AS"/>
</dbReference>
<dbReference type="InterPro" id="IPR050131">
    <property type="entry name" value="Peptidase_S8_subtilisin-like"/>
</dbReference>
<dbReference type="InterPro" id="IPR015500">
    <property type="entry name" value="Peptidase_S8_subtilisin-rel"/>
</dbReference>
<dbReference type="InterPro" id="IPR034185">
    <property type="entry name" value="Site-1_peptidase_cat_dom"/>
</dbReference>
<dbReference type="PANTHER" id="PTHR43806:SF7">
    <property type="entry name" value="MEMBRANE-BOUND TRANSCRIPTION FACTOR SITE-1 PROTEASE"/>
    <property type="match status" value="1"/>
</dbReference>
<dbReference type="PANTHER" id="PTHR43806">
    <property type="entry name" value="PEPTIDASE S8"/>
    <property type="match status" value="1"/>
</dbReference>
<dbReference type="Pfam" id="PF23001">
    <property type="entry name" value="MBTP1_N"/>
    <property type="match status" value="1"/>
</dbReference>
<dbReference type="Pfam" id="PF23094">
    <property type="entry name" value="MBTPS1_3rd"/>
    <property type="match status" value="1"/>
</dbReference>
<dbReference type="Pfam" id="PF23090">
    <property type="entry name" value="MBTPS1_4th"/>
    <property type="match status" value="1"/>
</dbReference>
<dbReference type="Pfam" id="PF00082">
    <property type="entry name" value="Peptidase_S8"/>
    <property type="match status" value="1"/>
</dbReference>
<dbReference type="PRINTS" id="PR00723">
    <property type="entry name" value="SUBTILISIN"/>
</dbReference>
<dbReference type="SUPFAM" id="SSF52743">
    <property type="entry name" value="Subtilisin-like"/>
    <property type="match status" value="1"/>
</dbReference>
<dbReference type="PROSITE" id="PS51892">
    <property type="entry name" value="SUBTILASE"/>
    <property type="match status" value="1"/>
</dbReference>
<dbReference type="PROSITE" id="PS00137">
    <property type="entry name" value="SUBTILASE_HIS"/>
    <property type="match status" value="1"/>
</dbReference>
<dbReference type="PROSITE" id="PS00138">
    <property type="entry name" value="SUBTILASE_SER"/>
    <property type="match status" value="1"/>
</dbReference>
<keyword id="KW-0068">Autocatalytic cleavage</keyword>
<keyword id="KW-0106">Calcium</keyword>
<keyword id="KW-0153">Cholesterol metabolism</keyword>
<keyword id="KW-0256">Endoplasmic reticulum</keyword>
<keyword id="KW-0325">Glycoprotein</keyword>
<keyword id="KW-0333">Golgi apparatus</keyword>
<keyword id="KW-0378">Hydrolase</keyword>
<keyword id="KW-0443">Lipid metabolism</keyword>
<keyword id="KW-0472">Membrane</keyword>
<keyword id="KW-0597">Phosphoprotein</keyword>
<keyword id="KW-0645">Protease</keyword>
<keyword id="KW-1185">Reference proteome</keyword>
<keyword id="KW-0720">Serine protease</keyword>
<keyword id="KW-0732">Signal</keyword>
<keyword id="KW-0753">Steroid metabolism</keyword>
<keyword id="KW-1207">Sterol metabolism</keyword>
<keyword id="KW-0812">Transmembrane</keyword>
<keyword id="KW-1133">Transmembrane helix</keyword>
<keyword id="KW-0865">Zymogen</keyword>
<feature type="signal peptide" evidence="2">
    <location>
        <begin position="1"/>
        <end position="17"/>
    </location>
</feature>
<feature type="propeptide" id="PRO_0000027055" evidence="2">
    <location>
        <begin position="18"/>
        <end position="186"/>
    </location>
</feature>
<feature type="chain" id="PRO_0000027056" description="Membrane-bound transcription factor site-1 protease">
    <location>
        <begin position="187"/>
        <end position="1052"/>
    </location>
</feature>
<feature type="topological domain" description="Lumenal" evidence="2">
    <location>
        <begin position="187"/>
        <end position="999"/>
    </location>
</feature>
<feature type="transmembrane region" description="Helical" evidence="2">
    <location>
        <begin position="1000"/>
        <end position="1022"/>
    </location>
</feature>
<feature type="topological domain" description="Cytoplasmic" evidence="2">
    <location>
        <begin position="1023"/>
        <end position="1052"/>
    </location>
</feature>
<feature type="domain" description="Peptidase S8" evidence="3">
    <location>
        <begin position="190"/>
        <end position="472"/>
    </location>
</feature>
<feature type="region of interest" description="Disordered" evidence="4">
    <location>
        <begin position="877"/>
        <end position="900"/>
    </location>
</feature>
<feature type="region of interest" description="Disordered" evidence="4">
    <location>
        <begin position="1026"/>
        <end position="1052"/>
    </location>
</feature>
<feature type="compositionally biased region" description="Polar residues" evidence="4">
    <location>
        <begin position="877"/>
        <end position="887"/>
    </location>
</feature>
<feature type="compositionally biased region" description="Basic residues" evidence="4">
    <location>
        <begin position="1026"/>
        <end position="1037"/>
    </location>
</feature>
<feature type="active site" description="Charge relay system" evidence="3">
    <location>
        <position position="218"/>
    </location>
</feature>
<feature type="active site" description="Charge relay system" evidence="3">
    <location>
        <position position="249"/>
    </location>
</feature>
<feature type="active site" description="Charge relay system" evidence="3">
    <location>
        <position position="414"/>
    </location>
</feature>
<feature type="site" description="Cleavage; by autolysis" evidence="1">
    <location>
        <begin position="186"/>
        <end position="187"/>
    </location>
</feature>
<feature type="modified residue" description="Phosphoserine" evidence="1">
    <location>
        <position position="168"/>
    </location>
</feature>
<feature type="glycosylation site" description="N-linked (GlcNAc...) asparagine" evidence="2">
    <location>
        <position position="148"/>
    </location>
</feature>
<feature type="glycosylation site" description="N-linked (GlcNAc...) asparagine" evidence="2">
    <location>
        <position position="236"/>
    </location>
</feature>
<feature type="glycosylation site" description="N-linked (GlcNAc...) asparagine" evidence="2">
    <location>
        <position position="305"/>
    </location>
</feature>
<feature type="glycosylation site" description="N-linked (GlcNAc...) asparagine" evidence="2">
    <location>
        <position position="515"/>
    </location>
</feature>
<feature type="glycosylation site" description="N-linked (GlcNAc...) asparagine" evidence="2">
    <location>
        <position position="728"/>
    </location>
</feature>
<feature type="glycosylation site" description="N-linked (GlcNAc...) asparagine" evidence="2">
    <location>
        <position position="939"/>
    </location>
</feature>
<feature type="sequence conflict" description="In Ref. 1; AAD27011." evidence="7" ref="1">
    <original>I</original>
    <variation>M</variation>
    <location>
        <position position="301"/>
    </location>
</feature>
<evidence type="ECO:0000250" key="1">
    <source>
        <dbReference type="UniProtKB" id="Q14703"/>
    </source>
</evidence>
<evidence type="ECO:0000255" key="2"/>
<evidence type="ECO:0000255" key="3">
    <source>
        <dbReference type="PROSITE-ProRule" id="PRU01240"/>
    </source>
</evidence>
<evidence type="ECO:0000256" key="4">
    <source>
        <dbReference type="SAM" id="MobiDB-lite"/>
    </source>
</evidence>
<evidence type="ECO:0000269" key="5">
    <source>
    </source>
</evidence>
<evidence type="ECO:0000303" key="6">
    <source>
    </source>
</evidence>
<evidence type="ECO:0000305" key="7"/>
<accession>Q9WTZ3</accession>
<accession>G3V7Z2</accession>
<protein>
    <recommendedName>
        <fullName>Membrane-bound transcription factor site-1 protease</fullName>
        <ecNumber evidence="5">3.4.21.112</ecNumber>
    </recommendedName>
    <alternativeName>
        <fullName>Endopeptidase S1P</fullName>
    </alternativeName>
    <alternativeName>
        <fullName evidence="6">Subtilisin/kexin isozyme 1</fullName>
        <shortName evidence="6">SKI-1</shortName>
    </alternativeName>
</protein>
<comment type="function">
    <text evidence="1">Serine protease that cleaves after hydrophobic or small residues, provided that Arg or Lys is in position P4: known substrates include SREBF1/SREBP1, SREBF2/SREBP2, BDNF, GNPTAB, ATF6, ATF6B and FAM20C. Cleaves substrates after Arg-Ser-Val-Leu (SREBP2), Arg-His-Leu-Leu (ATF6), Arg-Gly-Leu-Thr (BDNF) and its own propeptide after Arg-Arg-Leu-Leu. Catalyzes the first step in the proteolytic activation of the sterol regulatory element-binding proteins (SREBPs) SREBF1/SREBP1 and SREBF2/SREBP2. Also mediates the first step in the proteolytic activation of the cyclic AMP-dependent transcription factor ATF-6 (ATF6 and ATF6B). Mediates the protein cleavage of GNPTAB into subunit alpha and beta, thereby participating in biogenesis of lysosomes. Cleaves the propeptide from FAM20C which is required for FAM20C secretion from the Golgi apparatus membrane and for enhancement of FAM20C kinase activity, promoting osteoblast differentiation and biomineralization. Involved in the regulation of M6P-dependent Golgi-to-lysosome trafficking of lysosomal enzymes. It is required for the activation of CREB3L2/BBF2H7, a transcriptional activator of MIA3/TANGO and other genes controlling mega vesicle formation. Therefore, it plays a key role in the regulation of mega vesicle-mediated collagen trafficking. In astrocytes and osteoblasts, upon DNA damage and ER stress, mediates the first step of the regulated intramembrane proteolytic activation of the transcription factor CREB3L1, leading to the inhibition of cell-cycle progression.</text>
</comment>
<comment type="catalytic activity">
    <reaction evidence="5">
        <text>Processes precursors containing basic and hydrophobic/aliphatic residues at P4 and P2, respectively, with a relatively relaxed acceptance of amino acids at P1 and P3.</text>
        <dbReference type="EC" id="3.4.21.112"/>
    </reaction>
</comment>
<comment type="cofactor">
    <cofactor evidence="1">
        <name>Ca(2+)</name>
        <dbReference type="ChEBI" id="CHEBI:29108"/>
    </cofactor>
</comment>
<comment type="activity regulation">
    <text evidence="1">Inhibited by divalent copper and zinc ions, but not by nickel or cobalt. Inhibited by its prosegment, but not smaller fragments. Inhibited by 4-(2-aminoethyl)benzenesulfonyl fluoride (AEBSF), a serine protease inhibitor.</text>
</comment>
<comment type="subunit">
    <text evidence="1">Interacts with LYSET; this interaction bridges GNPTAB to MBTPS1.</text>
</comment>
<comment type="subcellular location">
    <subcellularLocation>
        <location evidence="1">Endoplasmic reticulum membrane</location>
        <topology evidence="2">Single-pass type I membrane protein</topology>
    </subcellularLocation>
    <subcellularLocation>
        <location evidence="5">Golgi apparatus membrane</location>
        <topology evidence="2">Single-pass type I membrane protein</topology>
    </subcellularLocation>
    <text evidence="1">May sort to other organelles, including lysosomal and/or endosomal compartments.</text>
</comment>
<comment type="tissue specificity">
    <text evidence="5">Widely expressed (PubMed:9990022). In adult rat, highly expressed in anterior pituitary, thyroid and adrenal glands and in liver (PubMed:9990022). In 2-day old rat, detected in developing skin, striated muscles, cardiac muscles, bones, teeth and internal organs (PubMed:9990022). Highly expressed in retina, cerebellum, pituitary, submaxillary, thyroid and adrenal glands, molars, thymus, kidney and intestine (PubMed:9990022).</text>
</comment>
<comment type="PTM">
    <text evidence="1">The 148 kDa zymogen is processed progressively into two membrane-bound 120 and 106 kDa forms in the endoplasmic reticulum, and late into a secreted 98 kDa form. The propeptide is autocatalytically removed through an intramolecular cleavage after Leu-186. Further cleavage generates 14, 10, and 8 kDa intermediates.</text>
</comment>
<comment type="similarity">
    <text evidence="7">Belongs to the peptidase S8 family.</text>
</comment>
<sequence>MKLVNIWLLLLVVLLCGKKHLGDRLGKKAFEKAPCPSCSHLTLKVEFSSTVVEYEYIVAFNGYFTAKARNSFISSALKSSEVDNWRIIPRNNPSSDYPSDFEVIQIKEKQKAGLLTLEDHPNIKRVTPQRKVFRSLKFAESDPIVPCNETRWSQKWQSSRPLKRASLSLGSGFWHATGRHSSRRLLRAIPRQVAQTLQADVLWQMGYTGANVRVAVFDTGLSEKHPHFKNVKERTNWTNERTLDDGLGHGTFVAGVIASMRECQGFAPDAELHIFRVFTNNQVSYTSWFLDAFNYAILKKIDVLNLSIGGPDFMDHPFVDKVWELTANNVIMVSAIGNDGPLYGTLNNPADQMDVIGVGGIDFEDNIARFSSRGMTTWELPGGYGRVKPDIVTYGAGVRGSGVKGGCRALSGTSVASPVVAGAVTLLVSTVQKRELVNPASVKQALIASARRLPGVNMFEQGHGKLDLLRAYQILSSYKPQASLSPSYIDLTECPYMWPYCSQPIYYGGMPTIVNVTILNGMGVTGRIVDKPEWRPYLPQNGDNIEVAFSYSSVLWPWSGYLAISISVTKKAASWEGIAQGHIMITVASPAETELKNGAEHTSTVKLPIKVKIIPTPPRSKRVLWDQYHNLRYPPGYFPRDNLRMKNDPLDWNGDHVHTNFRDMYQHLRSMGYFVEVLGAPFTCFDATQYGTLLMVDSEEEYFPEEIAKLRRDVDNGLSLVVFSDWYNTSVMRKVKFYDENTRQWWMPDTGGANVPALNELLSVWNMGFSDGLYEGEFALANHDMYYASGCSIARFPEDGVVITQTFKDQGLEVLKQETAVVDNVPILGLYQIPAEGGGRIVLYGDSNCLDDSHRQKDCFWLLDALLQYTSYGVTPPSLSHSGNRQRPPSGAGLAPPERMEGNHLHRYSKVLEAHLGDPKPRPLPACPHLSWAKPQPLNETAPSNLWKHQKLLSIDLDKVVLPNFRSNRPQVRPLSPGESGAWDIPGGIMPGRYNQEVGQTIPVFAFLGAMVALAFFVVQISKAKSRPKRRRPRAKRPQLAQQAHPARTPSV</sequence>
<organism>
    <name type="scientific">Rattus norvegicus</name>
    <name type="common">Rat</name>
    <dbReference type="NCBI Taxonomy" id="10116"/>
    <lineage>
        <taxon>Eukaryota</taxon>
        <taxon>Metazoa</taxon>
        <taxon>Chordata</taxon>
        <taxon>Craniata</taxon>
        <taxon>Vertebrata</taxon>
        <taxon>Euteleostomi</taxon>
        <taxon>Mammalia</taxon>
        <taxon>Eutheria</taxon>
        <taxon>Euarchontoglires</taxon>
        <taxon>Glires</taxon>
        <taxon>Rodentia</taxon>
        <taxon>Myomorpha</taxon>
        <taxon>Muroidea</taxon>
        <taxon>Muridae</taxon>
        <taxon>Murinae</taxon>
        <taxon>Rattus</taxon>
    </lineage>
</organism>
<reference key="1">
    <citation type="journal article" date="1999" name="Proc. Natl. Acad. Sci. U.S.A.">
        <title>Mammalian subtilisin/kexin isozyme SKI-1: a widely expressed proprotein convertase with a unique cleavage specificity and cellular localization.</title>
        <authorList>
            <person name="Seidah N.G."/>
            <person name="Mowla S.J."/>
            <person name="Hamelin J."/>
            <person name="Mamarbachi A.M."/>
            <person name="Benjannet S."/>
            <person name="Toure B.B."/>
            <person name="Basak A."/>
            <person name="Munzer J.S."/>
            <person name="Marcinkiewicz J."/>
            <person name="Zhong M."/>
            <person name="Barale J.-C."/>
            <person name="Lazure C."/>
            <person name="Murphy R.A."/>
            <person name="Chretien M."/>
            <person name="Marcinkiewicz M."/>
        </authorList>
    </citation>
    <scope>NUCLEOTIDE SEQUENCE [MRNA]</scope>
    <scope>CATALYTIC ACTIVITY</scope>
    <scope>SUBCELLULAR LOCATION</scope>
    <scope>TISSUE SPECIFICITY</scope>
    <source>
        <strain>Sprague-Dawley</strain>
        <tissue>Adrenal gland</tissue>
    </source>
</reference>
<reference key="2">
    <citation type="journal article" date="2004" name="Nature">
        <title>Genome sequence of the Brown Norway rat yields insights into mammalian evolution.</title>
        <authorList>
            <person name="Gibbs R.A."/>
            <person name="Weinstock G.M."/>
            <person name="Metzker M.L."/>
            <person name="Muzny D.M."/>
            <person name="Sodergren E.J."/>
            <person name="Scherer S."/>
            <person name="Scott G."/>
            <person name="Steffen D."/>
            <person name="Worley K.C."/>
            <person name="Burch P.E."/>
            <person name="Okwuonu G."/>
            <person name="Hines S."/>
            <person name="Lewis L."/>
            <person name="Deramo C."/>
            <person name="Delgado O."/>
            <person name="Dugan-Rocha S."/>
            <person name="Miner G."/>
            <person name="Morgan M."/>
            <person name="Hawes A."/>
            <person name="Gill R."/>
            <person name="Holt R.A."/>
            <person name="Adams M.D."/>
            <person name="Amanatides P.G."/>
            <person name="Baden-Tillson H."/>
            <person name="Barnstead M."/>
            <person name="Chin S."/>
            <person name="Evans C.A."/>
            <person name="Ferriera S."/>
            <person name="Fosler C."/>
            <person name="Glodek A."/>
            <person name="Gu Z."/>
            <person name="Jennings D."/>
            <person name="Kraft C.L."/>
            <person name="Nguyen T."/>
            <person name="Pfannkoch C.M."/>
            <person name="Sitter C."/>
            <person name="Sutton G.G."/>
            <person name="Venter J.C."/>
            <person name="Woodage T."/>
            <person name="Smith D."/>
            <person name="Lee H.-M."/>
            <person name="Gustafson E."/>
            <person name="Cahill P."/>
            <person name="Kana A."/>
            <person name="Doucette-Stamm L."/>
            <person name="Weinstock K."/>
            <person name="Fechtel K."/>
            <person name="Weiss R.B."/>
            <person name="Dunn D.M."/>
            <person name="Green E.D."/>
            <person name="Blakesley R.W."/>
            <person name="Bouffard G.G."/>
            <person name="De Jong P.J."/>
            <person name="Osoegawa K."/>
            <person name="Zhu B."/>
            <person name="Marra M."/>
            <person name="Schein J."/>
            <person name="Bosdet I."/>
            <person name="Fjell C."/>
            <person name="Jones S."/>
            <person name="Krzywinski M."/>
            <person name="Mathewson C."/>
            <person name="Siddiqui A."/>
            <person name="Wye N."/>
            <person name="McPherson J."/>
            <person name="Zhao S."/>
            <person name="Fraser C.M."/>
            <person name="Shetty J."/>
            <person name="Shatsman S."/>
            <person name="Geer K."/>
            <person name="Chen Y."/>
            <person name="Abramzon S."/>
            <person name="Nierman W.C."/>
            <person name="Havlak P.H."/>
            <person name="Chen R."/>
            <person name="Durbin K.J."/>
            <person name="Egan A."/>
            <person name="Ren Y."/>
            <person name="Song X.-Z."/>
            <person name="Li B."/>
            <person name="Liu Y."/>
            <person name="Qin X."/>
            <person name="Cawley S."/>
            <person name="Cooney A.J."/>
            <person name="D'Souza L.M."/>
            <person name="Martin K."/>
            <person name="Wu J.Q."/>
            <person name="Gonzalez-Garay M.L."/>
            <person name="Jackson A.R."/>
            <person name="Kalafus K.J."/>
            <person name="McLeod M.P."/>
            <person name="Milosavljevic A."/>
            <person name="Virk D."/>
            <person name="Volkov A."/>
            <person name="Wheeler D.A."/>
            <person name="Zhang Z."/>
            <person name="Bailey J.A."/>
            <person name="Eichler E.E."/>
            <person name="Tuzun E."/>
            <person name="Birney E."/>
            <person name="Mongin E."/>
            <person name="Ureta-Vidal A."/>
            <person name="Woodwark C."/>
            <person name="Zdobnov E."/>
            <person name="Bork P."/>
            <person name="Suyama M."/>
            <person name="Torrents D."/>
            <person name="Alexandersson M."/>
            <person name="Trask B.J."/>
            <person name="Young J.M."/>
            <person name="Huang H."/>
            <person name="Wang H."/>
            <person name="Xing H."/>
            <person name="Daniels S."/>
            <person name="Gietzen D."/>
            <person name="Schmidt J."/>
            <person name="Stevens K."/>
            <person name="Vitt U."/>
            <person name="Wingrove J."/>
            <person name="Camara F."/>
            <person name="Mar Alba M."/>
            <person name="Abril J.F."/>
            <person name="Guigo R."/>
            <person name="Smit A."/>
            <person name="Dubchak I."/>
            <person name="Rubin E.M."/>
            <person name="Couronne O."/>
            <person name="Poliakov A."/>
            <person name="Huebner N."/>
            <person name="Ganten D."/>
            <person name="Goesele C."/>
            <person name="Hummel O."/>
            <person name="Kreitler T."/>
            <person name="Lee Y.-A."/>
            <person name="Monti J."/>
            <person name="Schulz H."/>
            <person name="Zimdahl H."/>
            <person name="Himmelbauer H."/>
            <person name="Lehrach H."/>
            <person name="Jacob H.J."/>
            <person name="Bromberg S."/>
            <person name="Gullings-Handley J."/>
            <person name="Jensen-Seaman M.I."/>
            <person name="Kwitek A.E."/>
            <person name="Lazar J."/>
            <person name="Pasko D."/>
            <person name="Tonellato P.J."/>
            <person name="Twigger S."/>
            <person name="Ponting C.P."/>
            <person name="Duarte J.M."/>
            <person name="Rice S."/>
            <person name="Goodstadt L."/>
            <person name="Beatson S.A."/>
            <person name="Emes R.D."/>
            <person name="Winter E.E."/>
            <person name="Webber C."/>
            <person name="Brandt P."/>
            <person name="Nyakatura G."/>
            <person name="Adetobi M."/>
            <person name="Chiaromonte F."/>
            <person name="Elnitski L."/>
            <person name="Eswara P."/>
            <person name="Hardison R.C."/>
            <person name="Hou M."/>
            <person name="Kolbe D."/>
            <person name="Makova K."/>
            <person name="Miller W."/>
            <person name="Nekrutenko A."/>
            <person name="Riemer C."/>
            <person name="Schwartz S."/>
            <person name="Taylor J."/>
            <person name="Yang S."/>
            <person name="Zhang Y."/>
            <person name="Lindpaintner K."/>
            <person name="Andrews T.D."/>
            <person name="Caccamo M."/>
            <person name="Clamp M."/>
            <person name="Clarke L."/>
            <person name="Curwen V."/>
            <person name="Durbin R.M."/>
            <person name="Eyras E."/>
            <person name="Searle S.M."/>
            <person name="Cooper G.M."/>
            <person name="Batzoglou S."/>
            <person name="Brudno M."/>
            <person name="Sidow A."/>
            <person name="Stone E.A."/>
            <person name="Payseur B.A."/>
            <person name="Bourque G."/>
            <person name="Lopez-Otin C."/>
            <person name="Puente X.S."/>
            <person name="Chakrabarti K."/>
            <person name="Chatterji S."/>
            <person name="Dewey C."/>
            <person name="Pachter L."/>
            <person name="Bray N."/>
            <person name="Yap V.B."/>
            <person name="Caspi A."/>
            <person name="Tesler G."/>
            <person name="Pevzner P.A."/>
            <person name="Haussler D."/>
            <person name="Roskin K.M."/>
            <person name="Baertsch R."/>
            <person name="Clawson H."/>
            <person name="Furey T.S."/>
            <person name="Hinrichs A.S."/>
            <person name="Karolchik D."/>
            <person name="Kent W.J."/>
            <person name="Rosenbloom K.R."/>
            <person name="Trumbower H."/>
            <person name="Weirauch M."/>
            <person name="Cooper D.N."/>
            <person name="Stenson P.D."/>
            <person name="Ma B."/>
            <person name="Brent M."/>
            <person name="Arumugam M."/>
            <person name="Shteynberg D."/>
            <person name="Copley R.R."/>
            <person name="Taylor M.S."/>
            <person name="Riethman H."/>
            <person name="Mudunuri U."/>
            <person name="Peterson J."/>
            <person name="Guyer M."/>
            <person name="Felsenfeld A."/>
            <person name="Old S."/>
            <person name="Mockrin S."/>
            <person name="Collins F.S."/>
        </authorList>
    </citation>
    <scope>NUCLEOTIDE SEQUENCE [LARGE SCALE GENOMIC DNA]</scope>
    <source>
        <strain>Brown Norway</strain>
    </source>
</reference>
<reference key="3">
    <citation type="submission" date="2005-07" db="EMBL/GenBank/DDBJ databases">
        <authorList>
            <person name="Mural R.J."/>
            <person name="Adams M.D."/>
            <person name="Myers E.W."/>
            <person name="Smith H.O."/>
            <person name="Venter J.C."/>
        </authorList>
    </citation>
    <scope>NUCLEOTIDE SEQUENCE [LARGE SCALE GENOMIC DNA]</scope>
</reference>
<proteinExistence type="evidence at protein level"/>